<proteinExistence type="inferred from homology"/>
<keyword id="KW-0687">Ribonucleoprotein</keyword>
<keyword id="KW-0689">Ribosomal protein</keyword>
<keyword id="KW-0694">RNA-binding</keyword>
<keyword id="KW-0699">rRNA-binding</keyword>
<reference key="1">
    <citation type="journal article" date="2008" name="Mol. Biol. Evol.">
        <title>Genome evolution of Wolbachia strain wPip from the Culex pipiens group.</title>
        <authorList>
            <person name="Klasson L."/>
            <person name="Walker T."/>
            <person name="Sebaihia M."/>
            <person name="Sanders M.J."/>
            <person name="Quail M.A."/>
            <person name="Lord A."/>
            <person name="Sanders S."/>
            <person name="Earl J."/>
            <person name="O'Neill S.L."/>
            <person name="Thomson N."/>
            <person name="Sinkins S.P."/>
            <person name="Parkhill J."/>
        </authorList>
    </citation>
    <scope>NUCLEOTIDE SEQUENCE [LARGE SCALE GENOMIC DNA]</scope>
    <source>
        <strain>wPip</strain>
    </source>
</reference>
<dbReference type="EMBL" id="AM999887">
    <property type="protein sequence ID" value="CAQ54338.1"/>
    <property type="molecule type" value="Genomic_DNA"/>
</dbReference>
<dbReference type="RefSeq" id="WP_006012690.1">
    <property type="nucleotide sequence ID" value="NC_010981.1"/>
</dbReference>
<dbReference type="SMR" id="B3CP11"/>
<dbReference type="KEGG" id="wpi:WP0230"/>
<dbReference type="eggNOG" id="COG0522">
    <property type="taxonomic scope" value="Bacteria"/>
</dbReference>
<dbReference type="HOGENOM" id="CLU_092403_0_0_5"/>
<dbReference type="Proteomes" id="UP000008814">
    <property type="component" value="Chromosome"/>
</dbReference>
<dbReference type="GO" id="GO:0015935">
    <property type="term" value="C:small ribosomal subunit"/>
    <property type="evidence" value="ECO:0007669"/>
    <property type="project" value="InterPro"/>
</dbReference>
<dbReference type="GO" id="GO:0019843">
    <property type="term" value="F:rRNA binding"/>
    <property type="evidence" value="ECO:0007669"/>
    <property type="project" value="UniProtKB-UniRule"/>
</dbReference>
<dbReference type="GO" id="GO:0003735">
    <property type="term" value="F:structural constituent of ribosome"/>
    <property type="evidence" value="ECO:0007669"/>
    <property type="project" value="InterPro"/>
</dbReference>
<dbReference type="GO" id="GO:0042274">
    <property type="term" value="P:ribosomal small subunit biogenesis"/>
    <property type="evidence" value="ECO:0007669"/>
    <property type="project" value="TreeGrafter"/>
</dbReference>
<dbReference type="GO" id="GO:0006412">
    <property type="term" value="P:translation"/>
    <property type="evidence" value="ECO:0007669"/>
    <property type="project" value="UniProtKB-UniRule"/>
</dbReference>
<dbReference type="CDD" id="cd00165">
    <property type="entry name" value="S4"/>
    <property type="match status" value="1"/>
</dbReference>
<dbReference type="FunFam" id="3.10.290.10:FF:000001">
    <property type="entry name" value="30S ribosomal protein S4"/>
    <property type="match status" value="1"/>
</dbReference>
<dbReference type="Gene3D" id="1.10.1050.10">
    <property type="entry name" value="Ribosomal Protein S4 Delta 41, Chain A, domain 1"/>
    <property type="match status" value="1"/>
</dbReference>
<dbReference type="Gene3D" id="3.10.290.10">
    <property type="entry name" value="RNA-binding S4 domain"/>
    <property type="match status" value="1"/>
</dbReference>
<dbReference type="HAMAP" id="MF_01306_B">
    <property type="entry name" value="Ribosomal_uS4_B"/>
    <property type="match status" value="1"/>
</dbReference>
<dbReference type="InterPro" id="IPR022801">
    <property type="entry name" value="Ribosomal_uS4"/>
</dbReference>
<dbReference type="InterPro" id="IPR005709">
    <property type="entry name" value="Ribosomal_uS4_bac-type"/>
</dbReference>
<dbReference type="InterPro" id="IPR001912">
    <property type="entry name" value="Ribosomal_uS4_N"/>
</dbReference>
<dbReference type="InterPro" id="IPR002942">
    <property type="entry name" value="S4_RNA-bd"/>
</dbReference>
<dbReference type="InterPro" id="IPR036986">
    <property type="entry name" value="S4_RNA-bd_sf"/>
</dbReference>
<dbReference type="NCBIfam" id="NF003717">
    <property type="entry name" value="PRK05327.1"/>
    <property type="match status" value="1"/>
</dbReference>
<dbReference type="NCBIfam" id="TIGR01017">
    <property type="entry name" value="rpsD_bact"/>
    <property type="match status" value="1"/>
</dbReference>
<dbReference type="PANTHER" id="PTHR11831">
    <property type="entry name" value="30S 40S RIBOSOMAL PROTEIN"/>
    <property type="match status" value="1"/>
</dbReference>
<dbReference type="PANTHER" id="PTHR11831:SF4">
    <property type="entry name" value="SMALL RIBOSOMAL SUBUNIT PROTEIN US4M"/>
    <property type="match status" value="1"/>
</dbReference>
<dbReference type="Pfam" id="PF00163">
    <property type="entry name" value="Ribosomal_S4"/>
    <property type="match status" value="1"/>
</dbReference>
<dbReference type="Pfam" id="PF01479">
    <property type="entry name" value="S4"/>
    <property type="match status" value="1"/>
</dbReference>
<dbReference type="SMART" id="SM01390">
    <property type="entry name" value="Ribosomal_S4"/>
    <property type="match status" value="1"/>
</dbReference>
<dbReference type="SMART" id="SM00363">
    <property type="entry name" value="S4"/>
    <property type="match status" value="1"/>
</dbReference>
<dbReference type="SUPFAM" id="SSF55174">
    <property type="entry name" value="Alpha-L RNA-binding motif"/>
    <property type="match status" value="1"/>
</dbReference>
<dbReference type="PROSITE" id="PS50889">
    <property type="entry name" value="S4"/>
    <property type="match status" value="1"/>
</dbReference>
<feature type="chain" id="PRO_1000140816" description="Small ribosomal subunit protein uS4">
    <location>
        <begin position="1"/>
        <end position="204"/>
    </location>
</feature>
<feature type="domain" description="S4 RNA-binding" evidence="1">
    <location>
        <begin position="93"/>
        <end position="156"/>
    </location>
</feature>
<gene>
    <name evidence="1" type="primary">rpsD</name>
    <name type="ordered locus">WP0230</name>
</gene>
<protein>
    <recommendedName>
        <fullName evidence="1">Small ribosomal subunit protein uS4</fullName>
    </recommendedName>
    <alternativeName>
        <fullName evidence="2">30S ribosomal protein S4</fullName>
    </alternativeName>
</protein>
<accession>B3CP11</accession>
<sequence>MTTVINRKYRISRRLGVNLWGRAKDSVNKRKYPPGQHGILGFKKLSDFGKQFAAHKKFKFYYAISSKQLRRTFLDAYKRKGYTADNFIGALESRLSSVLYHSGFVPTIYSAKQLISHKHVTVNDKVVNISSYRVKPGDIVKIRERAAKIPILIEAEQKQERKAPDYLEADSKALSVKYLRAPQYSEVPYSADMEVNLVVEFYSR</sequence>
<comment type="function">
    <text evidence="1">One of the primary rRNA binding proteins, it binds directly to 16S rRNA where it nucleates assembly of the body of the 30S subunit.</text>
</comment>
<comment type="function">
    <text evidence="1">With S5 and S12 plays an important role in translational accuracy.</text>
</comment>
<comment type="subunit">
    <text evidence="1">Part of the 30S ribosomal subunit. Contacts protein S5. The interaction surface between S4 and S5 is involved in control of translational fidelity.</text>
</comment>
<comment type="similarity">
    <text evidence="1">Belongs to the universal ribosomal protein uS4 family.</text>
</comment>
<evidence type="ECO:0000255" key="1">
    <source>
        <dbReference type="HAMAP-Rule" id="MF_01306"/>
    </source>
</evidence>
<evidence type="ECO:0000305" key="2"/>
<name>RS4_WOLPP</name>
<organism>
    <name type="scientific">Wolbachia pipientis subsp. Culex pipiens (strain wPip)</name>
    <dbReference type="NCBI Taxonomy" id="570417"/>
    <lineage>
        <taxon>Bacteria</taxon>
        <taxon>Pseudomonadati</taxon>
        <taxon>Pseudomonadota</taxon>
        <taxon>Alphaproteobacteria</taxon>
        <taxon>Rickettsiales</taxon>
        <taxon>Anaplasmataceae</taxon>
        <taxon>Wolbachieae</taxon>
        <taxon>Wolbachia</taxon>
    </lineage>
</organism>